<keyword id="KW-0665">Pyrimidine biosynthesis</keyword>
<keyword id="KW-0808">Transferase</keyword>
<gene>
    <name evidence="1" type="primary">pyrB</name>
    <name type="ordered locus">ECDH10B_4440</name>
</gene>
<comment type="function">
    <text evidence="1">Catalyzes the condensation of carbamoyl phosphate and aspartate to form carbamoyl aspartate and inorganic phosphate, the committed step in the de novo pyrimidine nucleotide biosynthesis pathway.</text>
</comment>
<comment type="catalytic activity">
    <reaction evidence="1">
        <text>carbamoyl phosphate + L-aspartate = N-carbamoyl-L-aspartate + phosphate + H(+)</text>
        <dbReference type="Rhea" id="RHEA:20013"/>
        <dbReference type="ChEBI" id="CHEBI:15378"/>
        <dbReference type="ChEBI" id="CHEBI:29991"/>
        <dbReference type="ChEBI" id="CHEBI:32814"/>
        <dbReference type="ChEBI" id="CHEBI:43474"/>
        <dbReference type="ChEBI" id="CHEBI:58228"/>
        <dbReference type="EC" id="2.1.3.2"/>
    </reaction>
</comment>
<comment type="pathway">
    <text evidence="1">Pyrimidine metabolism; UMP biosynthesis via de novo pathway; (S)-dihydroorotate from bicarbonate: step 2/3.</text>
</comment>
<comment type="subunit">
    <text evidence="1">Heterododecamer (2C3:3R2) of six catalytic PyrB chains organized as two trimers (C3), and six regulatory PyrI chains organized as three dimers (R2).</text>
</comment>
<comment type="similarity">
    <text evidence="1">Belongs to the aspartate/ornithine carbamoyltransferase superfamily. ATCase family.</text>
</comment>
<protein>
    <recommendedName>
        <fullName evidence="1">Aspartate carbamoyltransferase catalytic subunit</fullName>
        <ecNumber evidence="1">2.1.3.2</ecNumber>
    </recommendedName>
    <alternativeName>
        <fullName evidence="1">Aspartate transcarbamylase</fullName>
        <shortName evidence="1">ATCase</shortName>
    </alternativeName>
</protein>
<reference key="1">
    <citation type="journal article" date="2008" name="J. Bacteriol.">
        <title>The complete genome sequence of Escherichia coli DH10B: insights into the biology of a laboratory workhorse.</title>
        <authorList>
            <person name="Durfee T."/>
            <person name="Nelson R."/>
            <person name="Baldwin S."/>
            <person name="Plunkett G. III"/>
            <person name="Burland V."/>
            <person name="Mau B."/>
            <person name="Petrosino J.F."/>
            <person name="Qin X."/>
            <person name="Muzny D.M."/>
            <person name="Ayele M."/>
            <person name="Gibbs R.A."/>
            <person name="Csorgo B."/>
            <person name="Posfai G."/>
            <person name="Weinstock G.M."/>
            <person name="Blattner F.R."/>
        </authorList>
    </citation>
    <scope>NUCLEOTIDE SEQUENCE [LARGE SCALE GENOMIC DNA]</scope>
    <source>
        <strain>K12 / DH10B</strain>
    </source>
</reference>
<evidence type="ECO:0000255" key="1">
    <source>
        <dbReference type="HAMAP-Rule" id="MF_00001"/>
    </source>
</evidence>
<feature type="chain" id="PRO_1000088761" description="Aspartate carbamoyltransferase catalytic subunit">
    <location>
        <begin position="1"/>
        <end position="311"/>
    </location>
</feature>
<feature type="binding site" evidence="1">
    <location>
        <position position="55"/>
    </location>
    <ligand>
        <name>carbamoyl phosphate</name>
        <dbReference type="ChEBI" id="CHEBI:58228"/>
    </ligand>
</feature>
<feature type="binding site" evidence="1">
    <location>
        <position position="56"/>
    </location>
    <ligand>
        <name>carbamoyl phosphate</name>
        <dbReference type="ChEBI" id="CHEBI:58228"/>
    </ligand>
</feature>
<feature type="binding site" evidence="1">
    <location>
        <position position="85"/>
    </location>
    <ligand>
        <name>L-aspartate</name>
        <dbReference type="ChEBI" id="CHEBI:29991"/>
    </ligand>
</feature>
<feature type="binding site" evidence="1">
    <location>
        <position position="106"/>
    </location>
    <ligand>
        <name>carbamoyl phosphate</name>
        <dbReference type="ChEBI" id="CHEBI:58228"/>
    </ligand>
</feature>
<feature type="binding site" evidence="1">
    <location>
        <position position="135"/>
    </location>
    <ligand>
        <name>carbamoyl phosphate</name>
        <dbReference type="ChEBI" id="CHEBI:58228"/>
    </ligand>
</feature>
<feature type="binding site" evidence="1">
    <location>
        <position position="138"/>
    </location>
    <ligand>
        <name>carbamoyl phosphate</name>
        <dbReference type="ChEBI" id="CHEBI:58228"/>
    </ligand>
</feature>
<feature type="binding site" evidence="1">
    <location>
        <position position="168"/>
    </location>
    <ligand>
        <name>L-aspartate</name>
        <dbReference type="ChEBI" id="CHEBI:29991"/>
    </ligand>
</feature>
<feature type="binding site" evidence="1">
    <location>
        <position position="230"/>
    </location>
    <ligand>
        <name>L-aspartate</name>
        <dbReference type="ChEBI" id="CHEBI:29991"/>
    </ligand>
</feature>
<feature type="binding site" evidence="1">
    <location>
        <position position="268"/>
    </location>
    <ligand>
        <name>carbamoyl phosphate</name>
        <dbReference type="ChEBI" id="CHEBI:58228"/>
    </ligand>
</feature>
<feature type="binding site" evidence="1">
    <location>
        <position position="269"/>
    </location>
    <ligand>
        <name>carbamoyl phosphate</name>
        <dbReference type="ChEBI" id="CHEBI:58228"/>
    </ligand>
</feature>
<dbReference type="EC" id="2.1.3.2" evidence="1"/>
<dbReference type="EMBL" id="CP000948">
    <property type="protein sequence ID" value="ACB05228.1"/>
    <property type="molecule type" value="Genomic_DNA"/>
</dbReference>
<dbReference type="RefSeq" id="WP_000013046.1">
    <property type="nucleotide sequence ID" value="NC_010473.1"/>
</dbReference>
<dbReference type="SMR" id="B1XEM6"/>
<dbReference type="GeneID" id="93777579"/>
<dbReference type="KEGG" id="ecd:ECDH10B_4440"/>
<dbReference type="HOGENOM" id="CLU_043846_1_2_6"/>
<dbReference type="UniPathway" id="UPA00070">
    <property type="reaction ID" value="UER00116"/>
</dbReference>
<dbReference type="GO" id="GO:0005829">
    <property type="term" value="C:cytosol"/>
    <property type="evidence" value="ECO:0007669"/>
    <property type="project" value="TreeGrafter"/>
</dbReference>
<dbReference type="GO" id="GO:0016597">
    <property type="term" value="F:amino acid binding"/>
    <property type="evidence" value="ECO:0007669"/>
    <property type="project" value="InterPro"/>
</dbReference>
<dbReference type="GO" id="GO:0004070">
    <property type="term" value="F:aspartate carbamoyltransferase activity"/>
    <property type="evidence" value="ECO:0007669"/>
    <property type="project" value="UniProtKB-UniRule"/>
</dbReference>
<dbReference type="GO" id="GO:0006207">
    <property type="term" value="P:'de novo' pyrimidine nucleobase biosynthetic process"/>
    <property type="evidence" value="ECO:0007669"/>
    <property type="project" value="InterPro"/>
</dbReference>
<dbReference type="GO" id="GO:0044205">
    <property type="term" value="P:'de novo' UMP biosynthetic process"/>
    <property type="evidence" value="ECO:0007669"/>
    <property type="project" value="UniProtKB-UniRule"/>
</dbReference>
<dbReference type="GO" id="GO:0006520">
    <property type="term" value="P:amino acid metabolic process"/>
    <property type="evidence" value="ECO:0007669"/>
    <property type="project" value="InterPro"/>
</dbReference>
<dbReference type="FunFam" id="3.40.50.1370:FF:000001">
    <property type="entry name" value="Aspartate carbamoyltransferase"/>
    <property type="match status" value="1"/>
</dbReference>
<dbReference type="FunFam" id="3.40.50.1370:FF:000002">
    <property type="entry name" value="Aspartate carbamoyltransferase 2"/>
    <property type="match status" value="1"/>
</dbReference>
<dbReference type="Gene3D" id="3.40.50.1370">
    <property type="entry name" value="Aspartate/ornithine carbamoyltransferase"/>
    <property type="match status" value="2"/>
</dbReference>
<dbReference type="HAMAP" id="MF_00001">
    <property type="entry name" value="Asp_carb_tr"/>
    <property type="match status" value="1"/>
</dbReference>
<dbReference type="InterPro" id="IPR006132">
    <property type="entry name" value="Asp/Orn_carbamoyltranf_P-bd"/>
</dbReference>
<dbReference type="InterPro" id="IPR006130">
    <property type="entry name" value="Asp/Orn_carbamoylTrfase"/>
</dbReference>
<dbReference type="InterPro" id="IPR036901">
    <property type="entry name" value="Asp/Orn_carbamoylTrfase_sf"/>
</dbReference>
<dbReference type="InterPro" id="IPR002082">
    <property type="entry name" value="Asp_carbamoyltransf"/>
</dbReference>
<dbReference type="InterPro" id="IPR006131">
    <property type="entry name" value="Asp_carbamoyltransf_Asp/Orn-bd"/>
</dbReference>
<dbReference type="NCBIfam" id="TIGR00670">
    <property type="entry name" value="asp_carb_tr"/>
    <property type="match status" value="1"/>
</dbReference>
<dbReference type="NCBIfam" id="NF002032">
    <property type="entry name" value="PRK00856.1"/>
    <property type="match status" value="1"/>
</dbReference>
<dbReference type="PANTHER" id="PTHR45753:SF6">
    <property type="entry name" value="ASPARTATE CARBAMOYLTRANSFERASE"/>
    <property type="match status" value="1"/>
</dbReference>
<dbReference type="PANTHER" id="PTHR45753">
    <property type="entry name" value="ORNITHINE CARBAMOYLTRANSFERASE, MITOCHONDRIAL"/>
    <property type="match status" value="1"/>
</dbReference>
<dbReference type="Pfam" id="PF00185">
    <property type="entry name" value="OTCace"/>
    <property type="match status" value="1"/>
</dbReference>
<dbReference type="Pfam" id="PF02729">
    <property type="entry name" value="OTCace_N"/>
    <property type="match status" value="1"/>
</dbReference>
<dbReference type="PRINTS" id="PR00100">
    <property type="entry name" value="AOTCASE"/>
</dbReference>
<dbReference type="PRINTS" id="PR00101">
    <property type="entry name" value="ATCASE"/>
</dbReference>
<dbReference type="SUPFAM" id="SSF53671">
    <property type="entry name" value="Aspartate/ornithine carbamoyltransferase"/>
    <property type="match status" value="1"/>
</dbReference>
<dbReference type="PROSITE" id="PS00097">
    <property type="entry name" value="CARBAMOYLTRANSFERASE"/>
    <property type="match status" value="1"/>
</dbReference>
<sequence>MANPLYQKHIISINDLSRDDLNLVLATAAKLKANPQPELLKHKVIASCFFEASTRTRLSFETSMHRLGASVVGFSDSANTSLGKKGETLADTISVISTYVDAIVMRHPQEGAARLATEFSGNVPVLNAGDGSNQHPTQTLLDLFTIQETQGRLDNLHVAMVGDLKYGRTVHSLTQALAKFDGNRFYFIAPDALAMPQYILDMLDEKGIAWSLHSSIEEVMAEVDILYMTRVQKERLDPSEYANVKAQFVLRASDLHNAKANMKVLHPLPRVDEIATDVDKTPHAWYFQQAGNGIFARQALLALVLNRDLVL</sequence>
<name>PYRB_ECODH</name>
<organism>
    <name type="scientific">Escherichia coli (strain K12 / DH10B)</name>
    <dbReference type="NCBI Taxonomy" id="316385"/>
    <lineage>
        <taxon>Bacteria</taxon>
        <taxon>Pseudomonadati</taxon>
        <taxon>Pseudomonadota</taxon>
        <taxon>Gammaproteobacteria</taxon>
        <taxon>Enterobacterales</taxon>
        <taxon>Enterobacteriaceae</taxon>
        <taxon>Escherichia</taxon>
    </lineage>
</organism>
<accession>B1XEM6</accession>
<proteinExistence type="inferred from homology"/>